<evidence type="ECO:0000250" key="1"/>
<evidence type="ECO:0000255" key="2">
    <source>
        <dbReference type="PROSITE-ProRule" id="PRU00434"/>
    </source>
</evidence>
<evidence type="ECO:0000305" key="3"/>
<protein>
    <recommendedName>
        <fullName>Putative ABC transporter ATP-binding protein GSU1281</fullName>
        <ecNumber>7.-.-.-</ecNumber>
    </recommendedName>
</protein>
<feature type="chain" id="PRO_0000092013" description="Putative ABC transporter ATP-binding protein GSU1281">
    <location>
        <begin position="1"/>
        <end position="249"/>
    </location>
</feature>
<feature type="domain" description="ABC transporter" evidence="2">
    <location>
        <begin position="6"/>
        <end position="236"/>
    </location>
</feature>
<feature type="binding site" evidence="2">
    <location>
        <begin position="39"/>
        <end position="46"/>
    </location>
    <ligand>
        <name>ATP</name>
        <dbReference type="ChEBI" id="CHEBI:30616"/>
    </ligand>
</feature>
<accession>Q74DN5</accession>
<dbReference type="EC" id="7.-.-.-"/>
<dbReference type="EMBL" id="AE017180">
    <property type="protein sequence ID" value="AAR34657.1"/>
    <property type="molecule type" value="Genomic_DNA"/>
</dbReference>
<dbReference type="RefSeq" id="NP_952334.1">
    <property type="nucleotide sequence ID" value="NC_002939.5"/>
</dbReference>
<dbReference type="RefSeq" id="WP_010941936.1">
    <property type="nucleotide sequence ID" value="NC_002939.5"/>
</dbReference>
<dbReference type="SMR" id="Q74DN5"/>
<dbReference type="STRING" id="243231.GSU1281"/>
<dbReference type="EnsemblBacteria" id="AAR34657">
    <property type="protein sequence ID" value="AAR34657"/>
    <property type="gene ID" value="GSU1281"/>
</dbReference>
<dbReference type="KEGG" id="gsu:GSU1281"/>
<dbReference type="PATRIC" id="fig|243231.5.peg.1276"/>
<dbReference type="eggNOG" id="COG1122">
    <property type="taxonomic scope" value="Bacteria"/>
</dbReference>
<dbReference type="HOGENOM" id="CLU_000604_1_22_7"/>
<dbReference type="InParanoid" id="Q74DN5"/>
<dbReference type="OrthoDB" id="9782163at2"/>
<dbReference type="Proteomes" id="UP000000577">
    <property type="component" value="Chromosome"/>
</dbReference>
<dbReference type="GO" id="GO:0043190">
    <property type="term" value="C:ATP-binding cassette (ABC) transporter complex"/>
    <property type="evidence" value="ECO:0000318"/>
    <property type="project" value="GO_Central"/>
</dbReference>
<dbReference type="GO" id="GO:0005524">
    <property type="term" value="F:ATP binding"/>
    <property type="evidence" value="ECO:0000318"/>
    <property type="project" value="GO_Central"/>
</dbReference>
<dbReference type="GO" id="GO:0016887">
    <property type="term" value="F:ATP hydrolysis activity"/>
    <property type="evidence" value="ECO:0007669"/>
    <property type="project" value="InterPro"/>
</dbReference>
<dbReference type="GO" id="GO:0042626">
    <property type="term" value="F:ATPase-coupled transmembrane transporter activity"/>
    <property type="evidence" value="ECO:0000318"/>
    <property type="project" value="GO_Central"/>
</dbReference>
<dbReference type="GO" id="GO:0006824">
    <property type="term" value="P:cobalt ion transport"/>
    <property type="evidence" value="ECO:0007669"/>
    <property type="project" value="InterPro"/>
</dbReference>
<dbReference type="CDD" id="cd03225">
    <property type="entry name" value="ABC_cobalt_CbiO_domain1"/>
    <property type="match status" value="1"/>
</dbReference>
<dbReference type="FunFam" id="3.40.50.300:FF:000224">
    <property type="entry name" value="Energy-coupling factor transporter ATP-binding protein EcfA"/>
    <property type="match status" value="1"/>
</dbReference>
<dbReference type="Gene3D" id="3.40.50.300">
    <property type="entry name" value="P-loop containing nucleotide triphosphate hydrolases"/>
    <property type="match status" value="1"/>
</dbReference>
<dbReference type="InterPro" id="IPR003593">
    <property type="entry name" value="AAA+_ATPase"/>
</dbReference>
<dbReference type="InterPro" id="IPR003439">
    <property type="entry name" value="ABC_transporter-like_ATP-bd"/>
</dbReference>
<dbReference type="InterPro" id="IPR017871">
    <property type="entry name" value="ABC_transporter-like_CS"/>
</dbReference>
<dbReference type="InterPro" id="IPR015856">
    <property type="entry name" value="ABC_transpr_CbiO/EcfA_su"/>
</dbReference>
<dbReference type="InterPro" id="IPR005876">
    <property type="entry name" value="Co_trans_ATP-bd"/>
</dbReference>
<dbReference type="InterPro" id="IPR050095">
    <property type="entry name" value="ECF_ABC_transporter_ATP-bd"/>
</dbReference>
<dbReference type="InterPro" id="IPR027417">
    <property type="entry name" value="P-loop_NTPase"/>
</dbReference>
<dbReference type="NCBIfam" id="TIGR01166">
    <property type="entry name" value="cbiO"/>
    <property type="match status" value="1"/>
</dbReference>
<dbReference type="PANTHER" id="PTHR43553:SF24">
    <property type="entry name" value="ENERGY-COUPLING FACTOR TRANSPORTER ATP-BINDING PROTEIN ECFA1"/>
    <property type="match status" value="1"/>
</dbReference>
<dbReference type="PANTHER" id="PTHR43553">
    <property type="entry name" value="HEAVY METAL TRANSPORTER"/>
    <property type="match status" value="1"/>
</dbReference>
<dbReference type="Pfam" id="PF00005">
    <property type="entry name" value="ABC_tran"/>
    <property type="match status" value="1"/>
</dbReference>
<dbReference type="SMART" id="SM00382">
    <property type="entry name" value="AAA"/>
    <property type="match status" value="1"/>
</dbReference>
<dbReference type="SUPFAM" id="SSF52540">
    <property type="entry name" value="P-loop containing nucleoside triphosphate hydrolases"/>
    <property type="match status" value="1"/>
</dbReference>
<dbReference type="PROSITE" id="PS00211">
    <property type="entry name" value="ABC_TRANSPORTER_1"/>
    <property type="match status" value="1"/>
</dbReference>
<dbReference type="PROSITE" id="PS50893">
    <property type="entry name" value="ABC_TRANSPORTER_2"/>
    <property type="match status" value="1"/>
</dbReference>
<comment type="function">
    <text evidence="1">Probably part of an ABC transporter complex. Responsible for energy coupling to the transport system (By similarity).</text>
</comment>
<comment type="subcellular location">
    <subcellularLocation>
        <location evidence="1">Cell inner membrane</location>
        <topology evidence="1">Peripheral membrane protein</topology>
    </subcellularLocation>
</comment>
<comment type="similarity">
    <text evidence="3">Belongs to the ABC transporter superfamily.</text>
</comment>
<name>Y1281_GEOSL</name>
<sequence length="249" mass="27431">MSHHIVEVRDLCHCYPDGTEALRGITFRIHHGESVAVVGANGAGKSTLLLHLNGYLAPTRGDVRIGDTPVVRTTLPEVRRTVGMVFQDPDDQLFMPTVFDDVAFGPLNLGLPPAEVERRVADALEQVGVAHLHNKPPYRLSGGEKRRVAIATVLSMSPDILVLDEPTTGLDPYARRQIMGLLRDFKHTKIITSHDLDMVMELCERTIVLREGRVAADGPTRDIFGNDELLATCRLERPLSMQGCPVCGR</sequence>
<organism>
    <name type="scientific">Geobacter sulfurreducens (strain ATCC 51573 / DSM 12127 / PCA)</name>
    <dbReference type="NCBI Taxonomy" id="243231"/>
    <lineage>
        <taxon>Bacteria</taxon>
        <taxon>Pseudomonadati</taxon>
        <taxon>Thermodesulfobacteriota</taxon>
        <taxon>Desulfuromonadia</taxon>
        <taxon>Geobacterales</taxon>
        <taxon>Geobacteraceae</taxon>
        <taxon>Geobacter</taxon>
    </lineage>
</organism>
<keyword id="KW-0067">ATP-binding</keyword>
<keyword id="KW-0997">Cell inner membrane</keyword>
<keyword id="KW-1003">Cell membrane</keyword>
<keyword id="KW-0472">Membrane</keyword>
<keyword id="KW-0547">Nucleotide-binding</keyword>
<keyword id="KW-1185">Reference proteome</keyword>
<keyword id="KW-1278">Translocase</keyword>
<keyword id="KW-0813">Transport</keyword>
<proteinExistence type="inferred from homology"/>
<reference key="1">
    <citation type="journal article" date="2003" name="Science">
        <title>Genome of Geobacter sulfurreducens: metal reduction in subsurface environments.</title>
        <authorList>
            <person name="Methe B.A."/>
            <person name="Nelson K.E."/>
            <person name="Eisen J.A."/>
            <person name="Paulsen I.T."/>
            <person name="Nelson W.C."/>
            <person name="Heidelberg J.F."/>
            <person name="Wu D."/>
            <person name="Wu M."/>
            <person name="Ward N.L."/>
            <person name="Beanan M.J."/>
            <person name="Dodson R.J."/>
            <person name="Madupu R."/>
            <person name="Brinkac L.M."/>
            <person name="Daugherty S.C."/>
            <person name="DeBoy R.T."/>
            <person name="Durkin A.S."/>
            <person name="Gwinn M.L."/>
            <person name="Kolonay J.F."/>
            <person name="Sullivan S.A."/>
            <person name="Haft D.H."/>
            <person name="Selengut J."/>
            <person name="Davidsen T.M."/>
            <person name="Zafar N."/>
            <person name="White O."/>
            <person name="Tran B."/>
            <person name="Romero C."/>
            <person name="Forberger H.A."/>
            <person name="Weidman J.F."/>
            <person name="Khouri H.M."/>
            <person name="Feldblyum T.V."/>
            <person name="Utterback T.R."/>
            <person name="Van Aken S.E."/>
            <person name="Lovley D.R."/>
            <person name="Fraser C.M."/>
        </authorList>
    </citation>
    <scope>NUCLEOTIDE SEQUENCE [LARGE SCALE GENOMIC DNA]</scope>
    <source>
        <strain>ATCC 51573 / DSM 12127 / PCA</strain>
    </source>
</reference>
<gene>
    <name type="ordered locus">GSU1281</name>
</gene>